<comment type="function">
    <text evidence="1 5">Plus-end tracking protein (+TIP) that binds to the plus-end of microtubules and regulates the dynamics of the microtubule cytoskeleton. Recruits other +TIP proteins to microtubules by binding to a conserved Ser-X-Leu-Pro (SXLP) motif in their polypeptide chains. Promotes cytoplasmic microtubule nucleation and elongation. Involved in mitotic spindle positioning by stabilizing microtubules and promoting dynamic connection between astral microtubules and the cortex during mitotic chromosome segregation. Assists chromosome alignment in metaphase by recruiting the SKA complex to the spindle and stabilizing its interactions with microtubule bundles (K-fibers). Also acts as a regulator of minus-end microtubule organization: interacts with the complex formed by AKAP9 and PDE4DIP, leading to recruit CAMSAP2 to the Golgi apparatus, thereby tethering non-centrosomal minus-end microtubules to the Golgi, an important step for polarized cell movement. Promotes elongation of CAMSAP2-decorated microtubule stretches on the minus-end of microtubules. Acts as a regulator of autophagosome transport via interaction with CAMSAP2 (By similarity). Functions downstream of Rho GTPases and DIAPH1 in stable microtubule formation (PubMed:15311282). May play a role in cell migration (PubMed:15311282).</text>
</comment>
<comment type="subunit">
    <text evidence="1 5 6 7 8 9 10 11 12">Homodimer (By similarity). Heterodimer with MAPRE3 (By similarity). Interacts (via C-terminal residues 206-211) with APC (via C-terminal residues 2674-2845); the interaction inhibits association with and bundling of F-actin (PubMed:15311282). Interacts with DCTN1, DIAPH1 and DIAPH2 (PubMed:15311282). Interacts with DCTN2, TERF1 and dynein intermediate chain (By similarity). Interacts with CLASP2, DST, KIF2C and STIM1; probably required for their targeting to the growing microtubule plus ends (By similarity). Interacts with MTUS2; interaction is direct and probably targets MTUS2 to microtubules (By similarity). Interacts (via C-terminus) with SKA1 (via SXIP motif); the interaction is direct and stabilizes the kinetochore-microtubule attachment of the SKA1 complex (By similarity). Interacts with APC2 (By similarity). Interacts with CLASP1 (By similarity). Interacts (via C-terminus) with CLIP1 (By similarity). Interacts with SLAIN2 and SLAIN1 (PubMed:21646404). Interacts with MACF1 (PubMed:18854161). Interacts with KIF18B; this interaction is required for efficient accumulation of KIF18B at microtubule plus ends (By similarity). Interacts with MISP (By similarity). Interacts with RABL2/RABL2A; binds preferentially to GTP-bound RABL2 (PubMed:23055941). Interacts with KCNAB2 (PubMed:21357749). Interacts with KNSTRN (By similarity). Interacts with NCKAP5L (By similarity). Interacts with AKAP9 (By similarity). Interacts with PDE4DIP isoform 2/MMG8/SMYLE; this interaction is required for its recruitment to the Golgi apparatus. May form a pericentrosomal complex with AKAP9, CDK5RAP2 and PDE4DIP isoform 2/MMG8/SMYLE; within this complex, MAPRE1 binding to CDK5RAP2 may be mediated by PDE4DIP (By similarity). Contrary to other mammalian species, does not interact with CDK5RAP2, possibly due to the lack of conservation of the MAPRE1-binding motif in mouse CDK5RAP2 (PubMed:19553473). Interacts with AKNA (PubMed:30787442). Interacts with GAS2L1, GAS2L2, and GAS2L3 (PubMed:24706950). Interacts with RARRES1 and AGBL2 (By similarity).</text>
</comment>
<comment type="interaction">
    <interactant intactId="EBI-2027055">
        <id>Q61166</id>
    </interactant>
    <interactant intactId="EBI-764653">
        <id>P14873</id>
        <label>Map1b</label>
    </interactant>
    <organismsDiffer>false</organismsDiffer>
    <experiments>5</experiments>
</comment>
<comment type="interaction">
    <interactant intactId="EBI-2027055">
        <id>Q61166</id>
    </interactant>
    <interactant intactId="EBI-310758">
        <id>Q03001</id>
        <label>DST</label>
    </interactant>
    <organismsDiffer>true</organismsDiffer>
    <experiments>4</experiments>
</comment>
<comment type="subcellular location">
    <subcellularLocation>
        <location evidence="5 8 11">Cytoplasm</location>
        <location evidence="5 8 11">Cytoskeleton</location>
    </subcellularLocation>
    <subcellularLocation>
        <location evidence="1">Cytoplasm</location>
        <location evidence="1">Cytoskeleton</location>
        <location evidence="1">Microtubule organizing center</location>
        <location evidence="1">Centrosome</location>
    </subcellularLocation>
    <subcellularLocation>
        <location evidence="1">Cytoplasm</location>
        <location evidence="1">Cytoskeleton</location>
        <location evidence="1">Spindle</location>
    </subcellularLocation>
    <subcellularLocation>
        <location evidence="1">Cytoplasm</location>
        <location evidence="1">Cytoskeleton</location>
        <location evidence="1">Spindle pole</location>
    </subcellularLocation>
    <text evidence="1 8">Associated with the microtubule network at the growing distal tip of microtubules (PubMed:21357749). In addition to localizing to microtubule plus-ends, also exhibits some localization along the length of the microtubules (By similarity). Also enriched at the centrosome (By similarity).</text>
</comment>
<comment type="tissue specificity">
    <text evidence="10">Expressed within the midpiece of sperm tail (at protein level).</text>
</comment>
<comment type="domain">
    <text evidence="1">Composed of two functionally independent domains. The N-terminal domain forms a hydrophobic cleft involved in microtubule binding and the C-terminal is involved in the formation of mutually exclusive complexes with APC and DCTN1.</text>
</comment>
<comment type="PTM">
    <text evidence="1">Acetylation at Lys-220 by KAT2B/PCAF promotes dynamic kinetochore-microtubule interactions in early mitosis.</text>
</comment>
<comment type="PTM">
    <text evidence="1">Crotonylated by KAT5 during mitosis, promoting astral microtubule plasticity and dynamic connection between astral microtubules and the cortex during mitotic chromosome segregation, thereby ensuring accurate spindle positioning in mitosis. Decrotonylated by HDAC3.</text>
</comment>
<comment type="similarity">
    <text evidence="14">Belongs to the MAPRE family.</text>
</comment>
<comment type="sequence caution" evidence="14">
    <conflict type="erroneous initiation">
        <sequence resource="EMBL-CDS" id="AAH52405"/>
    </conflict>
    <text>Extended N-terminus.</text>
</comment>
<gene>
    <name type="primary">Mapre1</name>
</gene>
<feature type="initiator methionine" description="Removed" evidence="13">
    <location>
        <position position="1"/>
    </location>
</feature>
<feature type="chain" id="PRO_0000213417" description="Microtubule-associated protein RP/EB family member 1">
    <location>
        <begin position="2"/>
        <end position="268"/>
    </location>
</feature>
<feature type="domain" description="Calponin-homology (CH)" evidence="2">
    <location>
        <begin position="14"/>
        <end position="116"/>
    </location>
</feature>
<feature type="domain" description="EB1 C-terminal" evidence="3">
    <location>
        <begin position="185"/>
        <end position="255"/>
    </location>
</feature>
<feature type="region of interest" description="Interaction with MTUS2/TIP150" evidence="1">
    <location>
        <begin position="124"/>
        <end position="268"/>
    </location>
</feature>
<feature type="region of interest" description="Disordered" evidence="4">
    <location>
        <begin position="146"/>
        <end position="180"/>
    </location>
</feature>
<feature type="region of interest" description="Interaction with APC" evidence="5">
    <location>
        <begin position="206"/>
        <end position="211"/>
    </location>
</feature>
<feature type="region of interest" description="DCTN1-binding" evidence="1">
    <location>
        <begin position="208"/>
        <end position="268"/>
    </location>
</feature>
<feature type="region of interest" description="APC-binding" evidence="1">
    <location>
        <begin position="220"/>
        <end position="242"/>
    </location>
</feature>
<feature type="region of interest" description="Interaction with SKA1" evidence="1">
    <location>
        <begin position="232"/>
        <end position="255"/>
    </location>
</feature>
<feature type="compositionally biased region" description="Polar residues" evidence="4">
    <location>
        <begin position="154"/>
        <end position="170"/>
    </location>
</feature>
<feature type="modified residue" description="N-acetylalanine" evidence="13">
    <location>
        <position position="2"/>
    </location>
</feature>
<feature type="modified residue" description="N6-crotonyllysine" evidence="1">
    <location>
        <position position="66"/>
    </location>
</feature>
<feature type="modified residue" description="Phosphotyrosine" evidence="1">
    <location>
        <position position="124"/>
    </location>
</feature>
<feature type="modified residue" description="Phosphoserine" evidence="1">
    <location>
        <position position="155"/>
    </location>
</feature>
<feature type="modified residue" description="N6-acetyllysine" evidence="1">
    <location>
        <position position="220"/>
    </location>
</feature>
<feature type="mutagenesis site" description="Loss of interaction with APC and DCTN1." evidence="5">
    <original>EKERD</original>
    <variation>KKERK</variation>
    <location>
        <begin position="211"/>
        <end position="215"/>
    </location>
</feature>
<feature type="mutagenesis site" description="Partial loss of interaction with APC." evidence="5">
    <original>EKE</original>
    <variation>AKA</variation>
    <location>
        <begin position="211"/>
        <end position="213"/>
    </location>
</feature>
<feature type="mutagenesis site" description="Loss of interaction with APC and DCTN1." evidence="5">
    <original>KLR</original>
    <variation>ALA</variation>
    <location>
        <begin position="220"/>
        <end position="222"/>
    </location>
</feature>
<feature type="strand" evidence="15">
    <location>
        <begin position="15"/>
        <end position="17"/>
    </location>
</feature>
<feature type="helix" evidence="15">
    <location>
        <begin position="18"/>
        <end position="28"/>
    </location>
</feature>
<feature type="strand" evidence="15">
    <location>
        <begin position="33"/>
        <end position="35"/>
    </location>
</feature>
<feature type="helix" evidence="15">
    <location>
        <begin position="36"/>
        <end position="38"/>
    </location>
</feature>
<feature type="strand" evidence="15">
    <location>
        <begin position="39"/>
        <end position="41"/>
    </location>
</feature>
<feature type="helix" evidence="15">
    <location>
        <begin position="43"/>
        <end position="51"/>
    </location>
</feature>
<feature type="turn" evidence="15">
    <location>
        <begin position="58"/>
        <end position="60"/>
    </location>
</feature>
<feature type="helix" evidence="15">
    <location>
        <begin position="68"/>
        <end position="85"/>
    </location>
</feature>
<feature type="turn" evidence="15">
    <location>
        <begin position="94"/>
        <end position="97"/>
    </location>
</feature>
<feature type="helix" evidence="15">
    <location>
        <begin position="105"/>
        <end position="116"/>
    </location>
</feature>
<feature type="helix" evidence="16">
    <location>
        <begin position="192"/>
        <end position="231"/>
    </location>
</feature>
<feature type="turn" evidence="16">
    <location>
        <begin position="232"/>
        <end position="234"/>
    </location>
</feature>
<feature type="helix" evidence="16">
    <location>
        <begin position="238"/>
        <end position="247"/>
    </location>
</feature>
<feature type="strand" evidence="17">
    <location>
        <begin position="251"/>
        <end position="253"/>
    </location>
</feature>
<protein>
    <recommendedName>
        <fullName>Microtubule-associated protein RP/EB family member 1</fullName>
    </recommendedName>
    <alternativeName>
        <fullName>APC-binding protein EB1</fullName>
    </alternativeName>
    <alternativeName>
        <fullName>End-binding protein 1</fullName>
        <shortName>EB1</shortName>
    </alternativeName>
</protein>
<proteinExistence type="evidence at protein level"/>
<dbReference type="EMBL" id="U51196">
    <property type="protein sequence ID" value="AAA96320.1"/>
    <property type="molecule type" value="mRNA"/>
</dbReference>
<dbReference type="EMBL" id="BC052405">
    <property type="protein sequence ID" value="AAH52405.1"/>
    <property type="status" value="ALT_INIT"/>
    <property type="molecule type" value="mRNA"/>
</dbReference>
<dbReference type="EMBL" id="BC064444">
    <property type="protein sequence ID" value="AAH64444.1"/>
    <property type="molecule type" value="mRNA"/>
</dbReference>
<dbReference type="CCDS" id="CCDS16917.1"/>
<dbReference type="RefSeq" id="NP_031922.1">
    <property type="nucleotide sequence ID" value="NM_007896.3"/>
</dbReference>
<dbReference type="RefSeq" id="XP_036014029.1">
    <property type="nucleotide sequence ID" value="XM_036158136.1"/>
</dbReference>
<dbReference type="PDB" id="1V5K">
    <property type="method" value="NMR"/>
    <property type="chains" value="A=15-116"/>
</dbReference>
<dbReference type="PDB" id="6EVI">
    <property type="method" value="NMR"/>
    <property type="chains" value="A/B=191-260"/>
</dbReference>
<dbReference type="PDB" id="6EVQ">
    <property type="method" value="NMR"/>
    <property type="chains" value="A/B=191-260"/>
</dbReference>
<dbReference type="PDB" id="7OLG">
    <property type="method" value="NMR"/>
    <property type="chains" value="A/B=191-260"/>
</dbReference>
<dbReference type="PDBsum" id="1V5K"/>
<dbReference type="PDBsum" id="6EVI"/>
<dbReference type="PDBsum" id="6EVQ"/>
<dbReference type="PDBsum" id="7OLG"/>
<dbReference type="BMRB" id="Q61166"/>
<dbReference type="SMR" id="Q61166"/>
<dbReference type="BioGRID" id="199356">
    <property type="interactions" value="43"/>
</dbReference>
<dbReference type="CORUM" id="Q61166"/>
<dbReference type="DIP" id="DIP-46795N"/>
<dbReference type="FunCoup" id="Q61166">
    <property type="interactions" value="1948"/>
</dbReference>
<dbReference type="IntAct" id="Q61166">
    <property type="interactions" value="31"/>
</dbReference>
<dbReference type="MINT" id="Q61166"/>
<dbReference type="STRING" id="10090.ENSMUSP00000028981"/>
<dbReference type="GlyGen" id="Q61166">
    <property type="glycosylation" value="1 site, 1 N-linked glycan (1 site)"/>
</dbReference>
<dbReference type="iPTMnet" id="Q61166"/>
<dbReference type="PhosphoSitePlus" id="Q61166"/>
<dbReference type="SwissPalm" id="Q61166"/>
<dbReference type="REPRODUCTION-2DPAGE" id="Q61166"/>
<dbReference type="jPOST" id="Q61166"/>
<dbReference type="PaxDb" id="10090-ENSMUSP00000028981"/>
<dbReference type="ProteomicsDB" id="295783"/>
<dbReference type="Pumba" id="Q61166"/>
<dbReference type="Antibodypedia" id="1211">
    <property type="antibodies" value="286 antibodies from 34 providers"/>
</dbReference>
<dbReference type="DNASU" id="13589"/>
<dbReference type="Ensembl" id="ENSMUST00000028981.9">
    <property type="protein sequence ID" value="ENSMUSP00000028981.9"/>
    <property type="gene ID" value="ENSMUSG00000027479.15"/>
</dbReference>
<dbReference type="GeneID" id="13589"/>
<dbReference type="KEGG" id="mmu:13589"/>
<dbReference type="UCSC" id="uc008nik.1">
    <property type="organism name" value="mouse"/>
</dbReference>
<dbReference type="AGR" id="MGI:891995"/>
<dbReference type="CTD" id="22919"/>
<dbReference type="MGI" id="MGI:891995">
    <property type="gene designation" value="Mapre1"/>
</dbReference>
<dbReference type="VEuPathDB" id="HostDB:ENSMUSG00000027479"/>
<dbReference type="eggNOG" id="KOG3000">
    <property type="taxonomic scope" value="Eukaryota"/>
</dbReference>
<dbReference type="GeneTree" id="ENSGT00490000043329"/>
<dbReference type="HOGENOM" id="CLU_041744_1_1_1"/>
<dbReference type="InParanoid" id="Q61166"/>
<dbReference type="OMA" id="ETMPMNS"/>
<dbReference type="OrthoDB" id="2119228at2759"/>
<dbReference type="PhylomeDB" id="Q61166"/>
<dbReference type="TreeFam" id="TF313620"/>
<dbReference type="Reactome" id="R-MMU-141444">
    <property type="pathway name" value="Amplification of signal from unattached kinetochores via a MAD2 inhibitory signal"/>
</dbReference>
<dbReference type="Reactome" id="R-MMU-2467813">
    <property type="pathway name" value="Separation of Sister Chromatids"/>
</dbReference>
<dbReference type="Reactome" id="R-MMU-2500257">
    <property type="pathway name" value="Resolution of Sister Chromatid Cohesion"/>
</dbReference>
<dbReference type="Reactome" id="R-MMU-2565942">
    <property type="pathway name" value="Regulation of PLK1 Activity at G2/M Transition"/>
</dbReference>
<dbReference type="Reactome" id="R-MMU-380259">
    <property type="pathway name" value="Loss of Nlp from mitotic centrosomes"/>
</dbReference>
<dbReference type="Reactome" id="R-MMU-380270">
    <property type="pathway name" value="Recruitment of mitotic centrosome proteins and complexes"/>
</dbReference>
<dbReference type="Reactome" id="R-MMU-380284">
    <property type="pathway name" value="Loss of proteins required for interphase microtubule organization from the centrosome"/>
</dbReference>
<dbReference type="Reactome" id="R-MMU-380320">
    <property type="pathway name" value="Recruitment of NuMA to mitotic centrosomes"/>
</dbReference>
<dbReference type="Reactome" id="R-MMU-5620912">
    <property type="pathway name" value="Anchoring of the basal body to the plasma membrane"/>
</dbReference>
<dbReference type="Reactome" id="R-MMU-5663220">
    <property type="pathway name" value="RHO GTPases Activate Formins"/>
</dbReference>
<dbReference type="Reactome" id="R-MMU-68877">
    <property type="pathway name" value="Mitotic Prometaphase"/>
</dbReference>
<dbReference type="Reactome" id="R-MMU-8852276">
    <property type="pathway name" value="The role of GTSE1 in G2/M progression after G2 checkpoint"/>
</dbReference>
<dbReference type="Reactome" id="R-MMU-8854518">
    <property type="pathway name" value="AURKA Activation by TPX2"/>
</dbReference>
<dbReference type="Reactome" id="R-MMU-9648025">
    <property type="pathway name" value="EML4 and NUDC in mitotic spindle formation"/>
</dbReference>
<dbReference type="BioGRID-ORCS" id="13589">
    <property type="hits" value="8 hits in 75 CRISPR screens"/>
</dbReference>
<dbReference type="CD-CODE" id="01CA17F3">
    <property type="entry name" value="Centrosome"/>
</dbReference>
<dbReference type="ChiTaRS" id="Mapre1">
    <property type="organism name" value="mouse"/>
</dbReference>
<dbReference type="EvolutionaryTrace" id="Q61166"/>
<dbReference type="PRO" id="PR:Q61166"/>
<dbReference type="Proteomes" id="UP000000589">
    <property type="component" value="Chromosome 2"/>
</dbReference>
<dbReference type="RNAct" id="Q61166">
    <property type="molecule type" value="protein"/>
</dbReference>
<dbReference type="Bgee" id="ENSMUSG00000027479">
    <property type="expression patterns" value="Expressed in medial ganglionic eminence and 256 other cell types or tissues"/>
</dbReference>
<dbReference type="ExpressionAtlas" id="Q61166">
    <property type="expression patterns" value="baseline and differential"/>
</dbReference>
<dbReference type="GO" id="GO:0042995">
    <property type="term" value="C:cell projection"/>
    <property type="evidence" value="ECO:0000314"/>
    <property type="project" value="MGI"/>
</dbReference>
<dbReference type="GO" id="GO:0031253">
    <property type="term" value="C:cell projection membrane"/>
    <property type="evidence" value="ECO:0000314"/>
    <property type="project" value="MGI"/>
</dbReference>
<dbReference type="GO" id="GO:0005813">
    <property type="term" value="C:centrosome"/>
    <property type="evidence" value="ECO:0007669"/>
    <property type="project" value="UniProtKB-SubCell"/>
</dbReference>
<dbReference type="GO" id="GO:0036064">
    <property type="term" value="C:ciliary basal body"/>
    <property type="evidence" value="ECO:0000314"/>
    <property type="project" value="MGI"/>
</dbReference>
<dbReference type="GO" id="GO:0030981">
    <property type="term" value="C:cortical microtubule cytoskeleton"/>
    <property type="evidence" value="ECO:0000250"/>
    <property type="project" value="UniProtKB"/>
</dbReference>
<dbReference type="GO" id="GO:0005925">
    <property type="term" value="C:focal adhesion"/>
    <property type="evidence" value="ECO:0007669"/>
    <property type="project" value="Ensembl"/>
</dbReference>
<dbReference type="GO" id="GO:0005794">
    <property type="term" value="C:Golgi apparatus"/>
    <property type="evidence" value="ECO:0000314"/>
    <property type="project" value="MGI"/>
</dbReference>
<dbReference type="GO" id="GO:0005874">
    <property type="term" value="C:microtubule"/>
    <property type="evidence" value="ECO:0000314"/>
    <property type="project" value="UniProtKB"/>
</dbReference>
<dbReference type="GO" id="GO:0015630">
    <property type="term" value="C:microtubule cytoskeleton"/>
    <property type="evidence" value="ECO:0000314"/>
    <property type="project" value="MGI"/>
</dbReference>
<dbReference type="GO" id="GO:0035371">
    <property type="term" value="C:microtubule plus-end"/>
    <property type="evidence" value="ECO:0000314"/>
    <property type="project" value="UniProtKB"/>
</dbReference>
<dbReference type="GO" id="GO:1905721">
    <property type="term" value="C:mitotic spindle astral microtubule end"/>
    <property type="evidence" value="ECO:0007669"/>
    <property type="project" value="Ensembl"/>
</dbReference>
<dbReference type="GO" id="GO:1990498">
    <property type="term" value="C:mitotic spindle microtubule"/>
    <property type="evidence" value="ECO:0007669"/>
    <property type="project" value="Ensembl"/>
</dbReference>
<dbReference type="GO" id="GO:0097431">
    <property type="term" value="C:mitotic spindle pole"/>
    <property type="evidence" value="ECO:0000250"/>
    <property type="project" value="UniProtKB"/>
</dbReference>
<dbReference type="GO" id="GO:0042802">
    <property type="term" value="F:identical protein binding"/>
    <property type="evidence" value="ECO:0007669"/>
    <property type="project" value="Ensembl"/>
</dbReference>
<dbReference type="GO" id="GO:0051010">
    <property type="term" value="F:microtubule plus-end binding"/>
    <property type="evidence" value="ECO:0000314"/>
    <property type="project" value="MGI"/>
</dbReference>
<dbReference type="GO" id="GO:0120283">
    <property type="term" value="F:protein serine/threonine kinase binding"/>
    <property type="evidence" value="ECO:0007669"/>
    <property type="project" value="Ensembl"/>
</dbReference>
<dbReference type="GO" id="GO:0051315">
    <property type="term" value="P:attachment of mitotic spindle microtubules to kinetochore"/>
    <property type="evidence" value="ECO:0000250"/>
    <property type="project" value="UniProtKB"/>
</dbReference>
<dbReference type="GO" id="GO:0051301">
    <property type="term" value="P:cell division"/>
    <property type="evidence" value="ECO:0007669"/>
    <property type="project" value="UniProtKB-KW"/>
</dbReference>
<dbReference type="GO" id="GO:0016477">
    <property type="term" value="P:cell migration"/>
    <property type="evidence" value="ECO:0007669"/>
    <property type="project" value="Ensembl"/>
</dbReference>
<dbReference type="GO" id="GO:0000132">
    <property type="term" value="P:establishment of mitotic spindle orientation"/>
    <property type="evidence" value="ECO:0000250"/>
    <property type="project" value="UniProtKB"/>
</dbReference>
<dbReference type="GO" id="GO:0001578">
    <property type="term" value="P:microtubule bundle formation"/>
    <property type="evidence" value="ECO:0000314"/>
    <property type="project" value="UniProtKB"/>
</dbReference>
<dbReference type="GO" id="GO:0046785">
    <property type="term" value="P:microtubule polymerization"/>
    <property type="evidence" value="ECO:0000314"/>
    <property type="project" value="UniProtKB"/>
</dbReference>
<dbReference type="GO" id="GO:0031115">
    <property type="term" value="P:negative regulation of microtubule polymerization"/>
    <property type="evidence" value="ECO:0000250"/>
    <property type="project" value="UniProtKB"/>
</dbReference>
<dbReference type="GO" id="GO:1905515">
    <property type="term" value="P:non-motile cilium assembly"/>
    <property type="evidence" value="ECO:0000315"/>
    <property type="project" value="MGI"/>
</dbReference>
<dbReference type="GO" id="GO:0031116">
    <property type="term" value="P:positive regulation of microtubule polymerization"/>
    <property type="evidence" value="ECO:0007669"/>
    <property type="project" value="Ensembl"/>
</dbReference>
<dbReference type="GO" id="GO:1902888">
    <property type="term" value="P:protein localization to astral microtubule"/>
    <property type="evidence" value="ECO:0000250"/>
    <property type="project" value="UniProtKB"/>
</dbReference>
<dbReference type="GO" id="GO:0071539">
    <property type="term" value="P:protein localization to centrosome"/>
    <property type="evidence" value="ECO:0000315"/>
    <property type="project" value="MGI"/>
</dbReference>
<dbReference type="GO" id="GO:0035372">
    <property type="term" value="P:protein localization to microtubule"/>
    <property type="evidence" value="ECO:0000315"/>
    <property type="project" value="MGI"/>
</dbReference>
<dbReference type="GO" id="GO:1902480">
    <property type="term" value="P:protein localization to mitotic spindle"/>
    <property type="evidence" value="ECO:0007669"/>
    <property type="project" value="Ensembl"/>
</dbReference>
<dbReference type="CDD" id="cd00014">
    <property type="entry name" value="CH_SF"/>
    <property type="match status" value="1"/>
</dbReference>
<dbReference type="FunFam" id="1.20.5.1430:FF:000001">
    <property type="entry name" value="microtubule-associated protein RP/EB family member 1"/>
    <property type="match status" value="1"/>
</dbReference>
<dbReference type="FunFam" id="1.10.418.10:FF:000007">
    <property type="entry name" value="Microtubule-associated protein, RP/EB family, member 2"/>
    <property type="match status" value="1"/>
</dbReference>
<dbReference type="Gene3D" id="1.20.5.1430">
    <property type="match status" value="1"/>
</dbReference>
<dbReference type="Gene3D" id="1.10.418.10">
    <property type="entry name" value="Calponin-like domain"/>
    <property type="match status" value="1"/>
</dbReference>
<dbReference type="InterPro" id="IPR001715">
    <property type="entry name" value="CH_dom"/>
</dbReference>
<dbReference type="InterPro" id="IPR036872">
    <property type="entry name" value="CH_dom_sf"/>
</dbReference>
<dbReference type="InterPro" id="IPR004953">
    <property type="entry name" value="EB1_C"/>
</dbReference>
<dbReference type="InterPro" id="IPR036133">
    <property type="entry name" value="EB1_C_sf"/>
</dbReference>
<dbReference type="InterPro" id="IPR027328">
    <property type="entry name" value="MAPRE"/>
</dbReference>
<dbReference type="PANTHER" id="PTHR10623">
    <property type="entry name" value="MICROTUBULE-ASSOCIATED PROTEIN RP/EB FAMILY MEMBER"/>
    <property type="match status" value="1"/>
</dbReference>
<dbReference type="Pfam" id="PF00307">
    <property type="entry name" value="CH"/>
    <property type="match status" value="1"/>
</dbReference>
<dbReference type="Pfam" id="PF03271">
    <property type="entry name" value="EB1"/>
    <property type="match status" value="1"/>
</dbReference>
<dbReference type="SUPFAM" id="SSF47576">
    <property type="entry name" value="Calponin-homology domain, CH-domain"/>
    <property type="match status" value="1"/>
</dbReference>
<dbReference type="SUPFAM" id="SSF140612">
    <property type="entry name" value="EB1 dimerisation domain-like"/>
    <property type="match status" value="1"/>
</dbReference>
<dbReference type="PROSITE" id="PS50021">
    <property type="entry name" value="CH"/>
    <property type="match status" value="1"/>
</dbReference>
<dbReference type="PROSITE" id="PS51230">
    <property type="entry name" value="EB1_C"/>
    <property type="match status" value="1"/>
</dbReference>
<sequence length="268" mass="30016">MAVNVYSTSVTSDNLSRHDMLAWINESLQLNLTKIEQLCSGAAYCQFMDMLFPGSIALKKVKFQAKLEHEYIQNFKILQAGFKRMGVDKIIPVDKLVKGKFQDNFEFVQWFKKFFDANYDGKEYDPVAARQGQETAVAPSLVAPALSKPKKPLGSSTAAPQRPIATQRTTAAPKAGPGMVRKNPGVGNGDDEAAELMQQVKVLKLTVEDLEKERDFYFGKLRNIELICQENEGENDPVLQRIVDILYATDEGFVIPDEGGPQEEQEEY</sequence>
<keyword id="KW-0002">3D-structure</keyword>
<keyword id="KW-0007">Acetylation</keyword>
<keyword id="KW-0131">Cell cycle</keyword>
<keyword id="KW-0132">Cell division</keyword>
<keyword id="KW-0963">Cytoplasm</keyword>
<keyword id="KW-0206">Cytoskeleton</keyword>
<keyword id="KW-0903">Direct protein sequencing</keyword>
<keyword id="KW-0493">Microtubule</keyword>
<keyword id="KW-0498">Mitosis</keyword>
<keyword id="KW-0597">Phosphoprotein</keyword>
<keyword id="KW-1185">Reference proteome</keyword>
<name>MARE1_MOUSE</name>
<reference key="1">
    <citation type="submission" date="1996-03" db="EMBL/GenBank/DDBJ databases">
        <authorList>
            <person name="Sparks A.B."/>
            <person name="Kay B.K."/>
        </authorList>
    </citation>
    <scope>NUCLEOTIDE SEQUENCE [MRNA]</scope>
</reference>
<reference key="2">
    <citation type="journal article" date="2004" name="Genome Res.">
        <title>The status, quality, and expansion of the NIH full-length cDNA project: the Mammalian Gene Collection (MGC).</title>
        <authorList>
            <consortium name="The MGC Project Team"/>
        </authorList>
    </citation>
    <scope>NUCLEOTIDE SEQUENCE [LARGE SCALE MRNA]</scope>
    <source>
        <strain>C57BL/6J</strain>
        <tissue>Brain</tissue>
    </source>
</reference>
<reference key="3">
    <citation type="submission" date="2008-02" db="UniProtKB">
        <authorList>
            <person name="Bienvenut W.V."/>
            <person name="Serrels B."/>
            <person name="Brunton V.G."/>
            <person name="Frame M.C."/>
        </authorList>
    </citation>
    <scope>PROTEIN SEQUENCE OF 2-17; 77-84; 114-150 AND 205-214</scope>
    <scope>CLEAVAGE OF INITIATOR METHIONINE</scope>
    <scope>ACETYLATION AT ALA-2</scope>
    <scope>IDENTIFICATION BY MASS SPECTROMETRY</scope>
    <source>
        <tissue>Embryonic fibroblast</tissue>
    </source>
</reference>
<reference key="4">
    <citation type="journal article" date="2004" name="Nat. Cell Biol.">
        <title>EB1 and APC bind to mDia to stabilize microtubules downstream of Rho and promote cell migration.</title>
        <authorList>
            <person name="Wen Y."/>
            <person name="Eng C.H."/>
            <person name="Schmoranzer J."/>
            <person name="Cabrera-Poch N."/>
            <person name="Morris E.J.S."/>
            <person name="Chen M."/>
            <person name="Wallar B.J."/>
            <person name="Alberts A.S."/>
            <person name="Gundersen G.G."/>
        </authorList>
    </citation>
    <scope>FUNCTION</scope>
    <scope>INTERACTION WITH APC; DCTN1; DIAPH1 AND DIAPH2</scope>
    <scope>SUBCELLULAR LOCATION</scope>
    <scope>MUTAGENESIS OF 211-GLU--GLU-213; 211-GLU--ASP-215 AND 220-LYS--ARG-222</scope>
</reference>
<reference key="5">
    <citation type="journal article" date="2008" name="Cell">
        <title>ACF7 regulates cytoskeletal-focal adhesion dynamics and migration and has ATPase activity.</title>
        <authorList>
            <person name="Wu X."/>
            <person name="Kodama A."/>
            <person name="Fuchs E."/>
        </authorList>
    </citation>
    <scope>SUBCELLULAR LOCATION</scope>
    <scope>INTERACTION WITH MACF1</scope>
</reference>
<reference key="6">
    <citation type="journal article" date="2009" name="Mol. Biol. Cell">
        <title>Interaction of CDK5RAP2 with EB1 to track growing microtubule tips and to regulate microtubule dynamics.</title>
        <authorList>
            <person name="Fong K.W."/>
            <person name="Hau S.Y."/>
            <person name="Kho Y.S."/>
            <person name="Jia Y."/>
            <person name="He L."/>
            <person name="Qi R.Z."/>
        </authorList>
    </citation>
    <scope>LACK OF INTERACTION WITH MAPRE1</scope>
</reference>
<reference key="7">
    <citation type="journal article" date="2010" name="Cell">
        <title>A tissue-specific atlas of mouse protein phosphorylation and expression.</title>
        <authorList>
            <person name="Huttlin E.L."/>
            <person name="Jedrychowski M.P."/>
            <person name="Elias J.E."/>
            <person name="Goswami T."/>
            <person name="Rad R."/>
            <person name="Beausoleil S.A."/>
            <person name="Villen J."/>
            <person name="Haas W."/>
            <person name="Sowa M.E."/>
            <person name="Gygi S.P."/>
        </authorList>
    </citation>
    <scope>IDENTIFICATION BY MASS SPECTROMETRY [LARGE SCALE ANALYSIS]</scope>
    <source>
        <tissue>Brain</tissue>
        <tissue>Brown adipose tissue</tissue>
        <tissue>Heart</tissue>
        <tissue>Kidney</tissue>
        <tissue>Liver</tissue>
        <tissue>Lung</tissue>
        <tissue>Pancreas</tissue>
        <tissue>Spleen</tissue>
        <tissue>Testis</tissue>
    </source>
</reference>
<reference key="8">
    <citation type="journal article" date="2011" name="J. Cell Biol.">
        <title>Cdk-mediated phosphorylation of the Kvbeta2 auxiliary subunit regulates Kv1 channel axonal targeting.</title>
        <authorList>
            <person name="Vacher H."/>
            <person name="Yang J.W."/>
            <person name="Cerda O."/>
            <person name="Autillo-Touati A."/>
            <person name="Dargent B."/>
            <person name="Trimmer J.S."/>
        </authorList>
    </citation>
    <scope>INTERACTION WITH KCNAB2</scope>
    <scope>SUBCELLULAR LOCATION</scope>
</reference>
<reference key="9">
    <citation type="journal article" date="2011" name="J. Cell Biol.">
        <title>SLAIN2 links microtubule plus end-tracking proteins and controls microtubule growth in interphase.</title>
        <authorList>
            <person name="van der Vaart B."/>
            <person name="Manatschal C."/>
            <person name="Grigoriev I."/>
            <person name="Olieric V."/>
            <person name="Gouveia S.M."/>
            <person name="Bjelic S."/>
            <person name="Demmers J."/>
            <person name="Vorobjev I."/>
            <person name="Hoogenraad C.C."/>
            <person name="Steinmetz M.O."/>
            <person name="Akhmanova A."/>
        </authorList>
    </citation>
    <scope>INTERACTION WITH SLAIN2 AND SLAIN1</scope>
</reference>
<reference key="10">
    <citation type="journal article" date="2012" name="PLoS Genet.">
        <title>RAB-like 2 has an essential role in male fertility, sperm intra-flagellar transport, and tail assembly.</title>
        <authorList>
            <person name="Lo J.C."/>
            <person name="Jamsai D."/>
            <person name="O'Connor A.E."/>
            <person name="Borg C."/>
            <person name="Clark B.J."/>
            <person name="Whisstock J.C."/>
            <person name="Field M.C."/>
            <person name="Adams V."/>
            <person name="Ishikawa T."/>
            <person name="Aitken R.J."/>
            <person name="Whittle B."/>
            <person name="Goodnow C.C."/>
            <person name="Ormandy C.J."/>
            <person name="O'Bryan M.K."/>
        </authorList>
    </citation>
    <scope>INTERACTION WITH RABL2</scope>
    <scope>TISSUE SPECIFICITY</scope>
</reference>
<reference key="11">
    <citation type="journal article" date="2014" name="J. Cell Sci.">
        <title>GAS2-like proteins mediate communication between microtubules and actin through interactions with end-binding proteins.</title>
        <authorList>
            <person name="Stroud M.J."/>
            <person name="Nazgiewicz A."/>
            <person name="McKenzie E.A."/>
            <person name="Wang Y."/>
            <person name="Kammerer R.A."/>
            <person name="Ballestrem C."/>
        </authorList>
    </citation>
    <scope>INTERACTION WITH GAS2L1; GAS2L2 AND GAS2L3</scope>
    <scope>SUBCELLULAR LOCATION</scope>
</reference>
<reference key="12">
    <citation type="journal article" date="2019" name="Nature">
        <title>The centrosome protein AKNA regulates neurogenesis via microtubule organization.</title>
        <authorList>
            <person name="Camargo Ortega G."/>
            <person name="Falk S."/>
            <person name="Johansson P.A."/>
            <person name="Peyre E."/>
            <person name="Broix L."/>
            <person name="Sahu S.K."/>
            <person name="Hirst W."/>
            <person name="Schlichthaerle T."/>
            <person name="De Juan Romero C."/>
            <person name="Draganova K."/>
            <person name="Vinopal S."/>
            <person name="Chinnappa K."/>
            <person name="Gavranovic A."/>
            <person name="Karakaya T."/>
            <person name="Steininger T."/>
            <person name="Merl-Pham J."/>
            <person name="Feederle R."/>
            <person name="Shao W."/>
            <person name="Shi S.H."/>
            <person name="Hauck S.M."/>
            <person name="Jungmann R."/>
            <person name="Bradke F."/>
            <person name="Borrell V."/>
            <person name="Geerlof A."/>
            <person name="Reber S."/>
            <person name="Tiwari V.K."/>
            <person name="Huttner W.B."/>
            <person name="Wilsch-Braeuninger M."/>
            <person name="Nguyen L."/>
            <person name="Goetz M."/>
        </authorList>
    </citation>
    <scope>INTERACTION WITH AKNA</scope>
</reference>
<reference key="13">
    <citation type="submission" date="2004-05" db="PDB data bank">
        <title>Solution structure of the CH domain from mouse EB-1.</title>
        <authorList>
            <consortium name="RIKEN structural genomics initiative (RSGI)"/>
        </authorList>
    </citation>
    <scope>STRUCTURE BY NMR OF 12-117</scope>
</reference>
<organism>
    <name type="scientific">Mus musculus</name>
    <name type="common">Mouse</name>
    <dbReference type="NCBI Taxonomy" id="10090"/>
    <lineage>
        <taxon>Eukaryota</taxon>
        <taxon>Metazoa</taxon>
        <taxon>Chordata</taxon>
        <taxon>Craniata</taxon>
        <taxon>Vertebrata</taxon>
        <taxon>Euteleostomi</taxon>
        <taxon>Mammalia</taxon>
        <taxon>Eutheria</taxon>
        <taxon>Euarchontoglires</taxon>
        <taxon>Glires</taxon>
        <taxon>Rodentia</taxon>
        <taxon>Myomorpha</taxon>
        <taxon>Muroidea</taxon>
        <taxon>Muridae</taxon>
        <taxon>Murinae</taxon>
        <taxon>Mus</taxon>
        <taxon>Mus</taxon>
    </lineage>
</organism>
<evidence type="ECO:0000250" key="1">
    <source>
        <dbReference type="UniProtKB" id="Q15691"/>
    </source>
</evidence>
<evidence type="ECO:0000255" key="2">
    <source>
        <dbReference type="PROSITE-ProRule" id="PRU00044"/>
    </source>
</evidence>
<evidence type="ECO:0000255" key="3">
    <source>
        <dbReference type="PROSITE-ProRule" id="PRU00576"/>
    </source>
</evidence>
<evidence type="ECO:0000256" key="4">
    <source>
        <dbReference type="SAM" id="MobiDB-lite"/>
    </source>
</evidence>
<evidence type="ECO:0000269" key="5">
    <source>
    </source>
</evidence>
<evidence type="ECO:0000269" key="6">
    <source>
    </source>
</evidence>
<evidence type="ECO:0000269" key="7">
    <source>
    </source>
</evidence>
<evidence type="ECO:0000269" key="8">
    <source>
    </source>
</evidence>
<evidence type="ECO:0000269" key="9">
    <source>
    </source>
</evidence>
<evidence type="ECO:0000269" key="10">
    <source>
    </source>
</evidence>
<evidence type="ECO:0000269" key="11">
    <source>
    </source>
</evidence>
<evidence type="ECO:0000269" key="12">
    <source>
    </source>
</evidence>
<evidence type="ECO:0000269" key="13">
    <source ref="3"/>
</evidence>
<evidence type="ECO:0000305" key="14"/>
<evidence type="ECO:0007829" key="15">
    <source>
        <dbReference type="PDB" id="1V5K"/>
    </source>
</evidence>
<evidence type="ECO:0007829" key="16">
    <source>
        <dbReference type="PDB" id="6EVI"/>
    </source>
</evidence>
<evidence type="ECO:0007829" key="17">
    <source>
        <dbReference type="PDB" id="6EVQ"/>
    </source>
</evidence>
<accession>Q61166</accession>
<accession>Q7TN34</accession>